<reference key="1">
    <citation type="journal article" date="2006" name="J. Bacteriol.">
        <title>Pathogenomic sequence analysis of Bacillus cereus and Bacillus thuringiensis isolates closely related to Bacillus anthracis.</title>
        <authorList>
            <person name="Han C.S."/>
            <person name="Xie G."/>
            <person name="Challacombe J.F."/>
            <person name="Altherr M.R."/>
            <person name="Bhotika S.S."/>
            <person name="Bruce D."/>
            <person name="Campbell C.S."/>
            <person name="Campbell M.L."/>
            <person name="Chen J."/>
            <person name="Chertkov O."/>
            <person name="Cleland C."/>
            <person name="Dimitrijevic M."/>
            <person name="Doggett N.A."/>
            <person name="Fawcett J.J."/>
            <person name="Glavina T."/>
            <person name="Goodwin L.A."/>
            <person name="Hill K.K."/>
            <person name="Hitchcock P."/>
            <person name="Jackson P.J."/>
            <person name="Keim P."/>
            <person name="Kewalramani A.R."/>
            <person name="Longmire J."/>
            <person name="Lucas S."/>
            <person name="Malfatti S."/>
            <person name="McMurry K."/>
            <person name="Meincke L.J."/>
            <person name="Misra M."/>
            <person name="Moseman B.L."/>
            <person name="Mundt M."/>
            <person name="Munk A.C."/>
            <person name="Okinaka R.T."/>
            <person name="Parson-Quintana B."/>
            <person name="Reilly L.P."/>
            <person name="Richardson P."/>
            <person name="Robinson D.L."/>
            <person name="Rubin E."/>
            <person name="Saunders E."/>
            <person name="Tapia R."/>
            <person name="Tesmer J.G."/>
            <person name="Thayer N."/>
            <person name="Thompson L.S."/>
            <person name="Tice H."/>
            <person name="Ticknor L.O."/>
            <person name="Wills P.L."/>
            <person name="Brettin T.S."/>
            <person name="Gilna P."/>
        </authorList>
    </citation>
    <scope>NUCLEOTIDE SEQUENCE [LARGE SCALE GENOMIC DNA]</scope>
    <source>
        <strain>97-27</strain>
    </source>
</reference>
<accession>Q6HJB9</accession>
<comment type="function">
    <text evidence="1">Part of the twin-arginine translocation (Tat) system that transports large folded proteins containing a characteristic twin-arginine motif in their signal peptide across membranes. TatA could form the protein-conducting channel of the Tat system.</text>
</comment>
<comment type="subunit">
    <text evidence="1">Forms a complex with TatC.</text>
</comment>
<comment type="subcellular location">
    <subcellularLocation>
        <location evidence="1">Cell membrane</location>
        <topology evidence="1">Single-pass membrane protein</topology>
    </subcellularLocation>
</comment>
<comment type="similarity">
    <text evidence="1">Belongs to the TatA/E family.</text>
</comment>
<proteinExistence type="inferred from homology"/>
<feature type="chain" id="PRO_1000058953" description="Sec-independent protein translocase protein TatA">
    <location>
        <begin position="1"/>
        <end position="61"/>
    </location>
</feature>
<feature type="transmembrane region" description="Helical" evidence="1">
    <location>
        <begin position="1"/>
        <end position="21"/>
    </location>
</feature>
<sequence>MFSNIGFPGLILILVAVLILFGPKKLPEIGKALGETLKEFKKSTKELTDDAFQEKEKKEKM</sequence>
<keyword id="KW-1003">Cell membrane</keyword>
<keyword id="KW-0472">Membrane</keyword>
<keyword id="KW-0653">Protein transport</keyword>
<keyword id="KW-0811">Translocation</keyword>
<keyword id="KW-0812">Transmembrane</keyword>
<keyword id="KW-1133">Transmembrane helix</keyword>
<keyword id="KW-0813">Transport</keyword>
<gene>
    <name evidence="1" type="primary">tatA</name>
    <name type="ordered locus">BT9727_2028</name>
</gene>
<dbReference type="EMBL" id="AE017355">
    <property type="protein sequence ID" value="AAT59771.1"/>
    <property type="molecule type" value="Genomic_DNA"/>
</dbReference>
<dbReference type="RefSeq" id="WP_000492443.1">
    <property type="nucleotide sequence ID" value="NC_005957.1"/>
</dbReference>
<dbReference type="RefSeq" id="YP_036357.1">
    <property type="nucleotide sequence ID" value="NC_005957.1"/>
</dbReference>
<dbReference type="SMR" id="Q6HJB9"/>
<dbReference type="KEGG" id="btk:BT9727_2028"/>
<dbReference type="PATRIC" id="fig|281309.8.peg.2133"/>
<dbReference type="HOGENOM" id="CLU_086034_6_0_9"/>
<dbReference type="PRO" id="PR:Q6HJB9"/>
<dbReference type="Proteomes" id="UP000001301">
    <property type="component" value="Chromosome"/>
</dbReference>
<dbReference type="GO" id="GO:0033281">
    <property type="term" value="C:TAT protein transport complex"/>
    <property type="evidence" value="ECO:0007669"/>
    <property type="project" value="UniProtKB-UniRule"/>
</dbReference>
<dbReference type="GO" id="GO:0008320">
    <property type="term" value="F:protein transmembrane transporter activity"/>
    <property type="evidence" value="ECO:0007669"/>
    <property type="project" value="UniProtKB-UniRule"/>
</dbReference>
<dbReference type="GO" id="GO:0043953">
    <property type="term" value="P:protein transport by the Tat complex"/>
    <property type="evidence" value="ECO:0007669"/>
    <property type="project" value="UniProtKB-UniRule"/>
</dbReference>
<dbReference type="Gene3D" id="1.20.5.3310">
    <property type="match status" value="1"/>
</dbReference>
<dbReference type="HAMAP" id="MF_00236">
    <property type="entry name" value="TatA_E"/>
    <property type="match status" value="1"/>
</dbReference>
<dbReference type="InterPro" id="IPR003369">
    <property type="entry name" value="TatA/B/E"/>
</dbReference>
<dbReference type="InterPro" id="IPR006312">
    <property type="entry name" value="TatA/E"/>
</dbReference>
<dbReference type="NCBIfam" id="NF011430">
    <property type="entry name" value="PRK14861.1"/>
    <property type="match status" value="1"/>
</dbReference>
<dbReference type="NCBIfam" id="TIGR01411">
    <property type="entry name" value="tatAE"/>
    <property type="match status" value="1"/>
</dbReference>
<dbReference type="PANTHER" id="PTHR42982">
    <property type="entry name" value="SEC-INDEPENDENT PROTEIN TRANSLOCASE PROTEIN TATA"/>
    <property type="match status" value="1"/>
</dbReference>
<dbReference type="PANTHER" id="PTHR42982:SF1">
    <property type="entry name" value="SEC-INDEPENDENT PROTEIN TRANSLOCASE PROTEIN TATA"/>
    <property type="match status" value="1"/>
</dbReference>
<dbReference type="Pfam" id="PF02416">
    <property type="entry name" value="TatA_B_E"/>
    <property type="match status" value="1"/>
</dbReference>
<dbReference type="PRINTS" id="PR01506">
    <property type="entry name" value="TATBPROTEIN"/>
</dbReference>
<evidence type="ECO:0000255" key="1">
    <source>
        <dbReference type="HAMAP-Rule" id="MF_00236"/>
    </source>
</evidence>
<name>TATA_BACHK</name>
<organism>
    <name type="scientific">Bacillus thuringiensis subsp. konkukian (strain 97-27)</name>
    <dbReference type="NCBI Taxonomy" id="281309"/>
    <lineage>
        <taxon>Bacteria</taxon>
        <taxon>Bacillati</taxon>
        <taxon>Bacillota</taxon>
        <taxon>Bacilli</taxon>
        <taxon>Bacillales</taxon>
        <taxon>Bacillaceae</taxon>
        <taxon>Bacillus</taxon>
        <taxon>Bacillus cereus group</taxon>
    </lineage>
</organism>
<protein>
    <recommendedName>
        <fullName evidence="1">Sec-independent protein translocase protein TatA</fullName>
    </recommendedName>
</protein>